<sequence>MQGTLSVWLAKRGLVHRSLGFDYQGIETLQIKPEDWHSIAVILYVYGYNYLRSQCAYDVAPGGLLASVYHLTRIEYGVNQAEEVCIKVFTHRSNPRIPSVFWVWKSTDFQERESYDMLGITYDSHPRLKRILMPESWIGWPLRKDYIAPNFYEIQDAY</sequence>
<geneLocation type="chloroplast"/>
<keyword id="KW-0150">Chloroplast</keyword>
<keyword id="KW-0472">Membrane</keyword>
<keyword id="KW-0520">NAD</keyword>
<keyword id="KW-0521">NADP</keyword>
<keyword id="KW-0934">Plastid</keyword>
<keyword id="KW-0618">Plastoquinone</keyword>
<keyword id="KW-0874">Quinone</keyword>
<keyword id="KW-0793">Thylakoid</keyword>
<keyword id="KW-1278">Translocase</keyword>
<keyword id="KW-0813">Transport</keyword>
<gene>
    <name evidence="1" type="primary">ndhJ</name>
</gene>
<accession>A4QKT4</accession>
<protein>
    <recommendedName>
        <fullName evidence="1">NAD(P)H-quinone oxidoreductase subunit J, chloroplastic</fullName>
        <ecNumber evidence="1">7.1.1.-</ecNumber>
    </recommendedName>
    <alternativeName>
        <fullName>NAD(P)H dehydrogenase subunit J</fullName>
    </alternativeName>
    <alternativeName>
        <fullName evidence="1">NADH-plastoquinone oxidoreductase subunit J</fullName>
    </alternativeName>
</protein>
<name>NDHJ_CRUWA</name>
<comment type="function">
    <text evidence="1">NDH shuttles electrons from NAD(P)H:plastoquinone, via FMN and iron-sulfur (Fe-S) centers, to quinones in the photosynthetic chain and possibly in a chloroplast respiratory chain. The immediate electron acceptor for the enzyme in this species is believed to be plastoquinone. Couples the redox reaction to proton translocation, and thus conserves the redox energy in a proton gradient.</text>
</comment>
<comment type="catalytic activity">
    <reaction evidence="1">
        <text>a plastoquinone + NADH + (n+1) H(+)(in) = a plastoquinol + NAD(+) + n H(+)(out)</text>
        <dbReference type="Rhea" id="RHEA:42608"/>
        <dbReference type="Rhea" id="RHEA-COMP:9561"/>
        <dbReference type="Rhea" id="RHEA-COMP:9562"/>
        <dbReference type="ChEBI" id="CHEBI:15378"/>
        <dbReference type="ChEBI" id="CHEBI:17757"/>
        <dbReference type="ChEBI" id="CHEBI:57540"/>
        <dbReference type="ChEBI" id="CHEBI:57945"/>
        <dbReference type="ChEBI" id="CHEBI:62192"/>
    </reaction>
</comment>
<comment type="catalytic activity">
    <reaction evidence="1">
        <text>a plastoquinone + NADPH + (n+1) H(+)(in) = a plastoquinol + NADP(+) + n H(+)(out)</text>
        <dbReference type="Rhea" id="RHEA:42612"/>
        <dbReference type="Rhea" id="RHEA-COMP:9561"/>
        <dbReference type="Rhea" id="RHEA-COMP:9562"/>
        <dbReference type="ChEBI" id="CHEBI:15378"/>
        <dbReference type="ChEBI" id="CHEBI:17757"/>
        <dbReference type="ChEBI" id="CHEBI:57783"/>
        <dbReference type="ChEBI" id="CHEBI:58349"/>
        <dbReference type="ChEBI" id="CHEBI:62192"/>
    </reaction>
</comment>
<comment type="subunit">
    <text evidence="1">NDH is composed of at least 16 different subunits, 5 of which are encoded in the nucleus.</text>
</comment>
<comment type="subcellular location">
    <subcellularLocation>
        <location evidence="1">Plastid</location>
        <location evidence="1">Chloroplast thylakoid membrane</location>
        <topology evidence="1">Peripheral membrane protein</topology>
        <orientation evidence="1">Stromal side</orientation>
    </subcellularLocation>
</comment>
<comment type="similarity">
    <text evidence="1">Belongs to the complex I 30 kDa subunit family.</text>
</comment>
<dbReference type="EC" id="7.1.1.-" evidence="1"/>
<dbReference type="EMBL" id="AP009372">
    <property type="protein sequence ID" value="BAF50289.1"/>
    <property type="molecule type" value="Genomic_DNA"/>
</dbReference>
<dbReference type="RefSeq" id="YP_001123465.1">
    <property type="nucleotide sequence ID" value="NC_009271.1"/>
</dbReference>
<dbReference type="SMR" id="A4QKT4"/>
<dbReference type="GeneID" id="4962730"/>
<dbReference type="GO" id="GO:0009535">
    <property type="term" value="C:chloroplast thylakoid membrane"/>
    <property type="evidence" value="ECO:0007669"/>
    <property type="project" value="UniProtKB-SubCell"/>
</dbReference>
<dbReference type="GO" id="GO:0008137">
    <property type="term" value="F:NADH dehydrogenase (ubiquinone) activity"/>
    <property type="evidence" value="ECO:0007669"/>
    <property type="project" value="InterPro"/>
</dbReference>
<dbReference type="GO" id="GO:0048038">
    <property type="term" value="F:quinone binding"/>
    <property type="evidence" value="ECO:0007669"/>
    <property type="project" value="UniProtKB-KW"/>
</dbReference>
<dbReference type="GO" id="GO:0019684">
    <property type="term" value="P:photosynthesis, light reaction"/>
    <property type="evidence" value="ECO:0007669"/>
    <property type="project" value="UniProtKB-UniRule"/>
</dbReference>
<dbReference type="FunFam" id="3.30.460.80:FF:000004">
    <property type="entry name" value="NAD(P)H-quinone oxidoreductase subunit J, chloroplastic"/>
    <property type="match status" value="1"/>
</dbReference>
<dbReference type="Gene3D" id="3.30.460.80">
    <property type="entry name" value="NADH:ubiquinone oxidoreductase, 30kDa subunit"/>
    <property type="match status" value="1"/>
</dbReference>
<dbReference type="HAMAP" id="MF_01357">
    <property type="entry name" value="NDH1_NuoC"/>
    <property type="match status" value="1"/>
</dbReference>
<dbReference type="InterPro" id="IPR010218">
    <property type="entry name" value="NADH_DH_suC"/>
</dbReference>
<dbReference type="InterPro" id="IPR037232">
    <property type="entry name" value="NADH_quin_OxRdtase_su_C/D-like"/>
</dbReference>
<dbReference type="InterPro" id="IPR001268">
    <property type="entry name" value="NADH_UbQ_OxRdtase_30kDa_su"/>
</dbReference>
<dbReference type="InterPro" id="IPR020396">
    <property type="entry name" value="NADH_UbQ_OxRdtase_CS"/>
</dbReference>
<dbReference type="NCBIfam" id="NF009141">
    <property type="entry name" value="PRK12494.1"/>
    <property type="match status" value="1"/>
</dbReference>
<dbReference type="PANTHER" id="PTHR10884:SF14">
    <property type="entry name" value="NADH DEHYDROGENASE [UBIQUINONE] IRON-SULFUR PROTEIN 3, MITOCHONDRIAL"/>
    <property type="match status" value="1"/>
</dbReference>
<dbReference type="PANTHER" id="PTHR10884">
    <property type="entry name" value="NADH DEHYDROGENASE UBIQUINONE IRON-SULFUR PROTEIN 3"/>
    <property type="match status" value="1"/>
</dbReference>
<dbReference type="Pfam" id="PF00329">
    <property type="entry name" value="Complex1_30kDa"/>
    <property type="match status" value="1"/>
</dbReference>
<dbReference type="SUPFAM" id="SSF143243">
    <property type="entry name" value="Nqo5-like"/>
    <property type="match status" value="1"/>
</dbReference>
<dbReference type="PROSITE" id="PS00542">
    <property type="entry name" value="COMPLEX1_30K"/>
    <property type="match status" value="1"/>
</dbReference>
<feature type="chain" id="PRO_0000358257" description="NAD(P)H-quinone oxidoreductase subunit J, chloroplastic">
    <location>
        <begin position="1"/>
        <end position="158"/>
    </location>
</feature>
<reference key="1">
    <citation type="submission" date="2007-03" db="EMBL/GenBank/DDBJ databases">
        <title>Sequencing analysis of Crucihimalaya wallichii chloroplast DNA.</title>
        <authorList>
            <person name="Hosouchi T."/>
            <person name="Tsuruoka H."/>
            <person name="Kotani H."/>
        </authorList>
    </citation>
    <scope>NUCLEOTIDE SEQUENCE [LARGE SCALE GENOMIC DNA]</scope>
</reference>
<proteinExistence type="inferred from homology"/>
<organism>
    <name type="scientific">Crucihimalaya wallichii</name>
    <name type="common">Rock-cress</name>
    <name type="synonym">Arabidopsis campestris</name>
    <dbReference type="NCBI Taxonomy" id="78192"/>
    <lineage>
        <taxon>Eukaryota</taxon>
        <taxon>Viridiplantae</taxon>
        <taxon>Streptophyta</taxon>
        <taxon>Embryophyta</taxon>
        <taxon>Tracheophyta</taxon>
        <taxon>Spermatophyta</taxon>
        <taxon>Magnoliopsida</taxon>
        <taxon>eudicotyledons</taxon>
        <taxon>Gunneridae</taxon>
        <taxon>Pentapetalae</taxon>
        <taxon>rosids</taxon>
        <taxon>malvids</taxon>
        <taxon>Brassicales</taxon>
        <taxon>Brassicaceae</taxon>
        <taxon>Crucihimalayeae</taxon>
        <taxon>Crucihimalaya</taxon>
    </lineage>
</organism>
<evidence type="ECO:0000255" key="1">
    <source>
        <dbReference type="HAMAP-Rule" id="MF_01357"/>
    </source>
</evidence>